<reference key="1">
    <citation type="journal article" date="2004" name="Nat. Biotechnol.">
        <title>Complete sequence and comparative genome analysis of the dairy bacterium Streptococcus thermophilus.</title>
        <authorList>
            <person name="Bolotin A."/>
            <person name="Quinquis B."/>
            <person name="Renault P."/>
            <person name="Sorokin A."/>
            <person name="Ehrlich S.D."/>
            <person name="Kulakauskas S."/>
            <person name="Lapidus A."/>
            <person name="Goltsman E."/>
            <person name="Mazur M."/>
            <person name="Pusch G.D."/>
            <person name="Fonstein M."/>
            <person name="Overbeek R."/>
            <person name="Kyprides N."/>
            <person name="Purnelle B."/>
            <person name="Prozzi D."/>
            <person name="Ngui K."/>
            <person name="Masuy D."/>
            <person name="Hancy F."/>
            <person name="Burteau S."/>
            <person name="Boutry M."/>
            <person name="Delcour J."/>
            <person name="Goffeau A."/>
            <person name="Hols P."/>
        </authorList>
    </citation>
    <scope>NUCLEOTIDE SEQUENCE [LARGE SCALE GENOMIC DNA]</scope>
    <source>
        <strain>CNRZ 1066</strain>
    </source>
</reference>
<organism>
    <name type="scientific">Streptococcus thermophilus (strain CNRZ 1066)</name>
    <dbReference type="NCBI Taxonomy" id="299768"/>
    <lineage>
        <taxon>Bacteria</taxon>
        <taxon>Bacillati</taxon>
        <taxon>Bacillota</taxon>
        <taxon>Bacilli</taxon>
        <taxon>Lactobacillales</taxon>
        <taxon>Streptococcaceae</taxon>
        <taxon>Streptococcus</taxon>
    </lineage>
</organism>
<name>PEPT_STRT1</name>
<comment type="function">
    <text evidence="1">Cleaves the N-terminal amino acid of tripeptides.</text>
</comment>
<comment type="catalytic activity">
    <reaction evidence="1">
        <text>Release of the N-terminal residue from a tripeptide.</text>
        <dbReference type="EC" id="3.4.11.4"/>
    </reaction>
</comment>
<comment type="cofactor">
    <cofactor evidence="1">
        <name>Zn(2+)</name>
        <dbReference type="ChEBI" id="CHEBI:29105"/>
    </cofactor>
    <text evidence="1">Binds 2 Zn(2+) ions per subunit.</text>
</comment>
<comment type="subcellular location">
    <subcellularLocation>
        <location evidence="1">Cytoplasm</location>
    </subcellularLocation>
</comment>
<comment type="similarity">
    <text evidence="1">Belongs to the peptidase M20B family.</text>
</comment>
<sequence>MAYDLLLERFLRYAKINTRSDENATRTPTTQSQVDFALNILKPELEELGLSNIHYLESNGYLVATLPANDDRLTRKIGFISHMDTADFNAEGVSPQVIESYDGGIIPLGTSGYNLDPADFPNLQNYIGQTLITTDGTTLLGADDKSGIAEIMTALAHLKANPEIKHCEIRVGFGPDEEIGIGADKFDVDDFDVDFAYTVDGGPLGELQYETFSAAAAELIFHGRNVHPGTAKGQMVNALQLAIDFHNQLPAEDRPELTDGYQGFNHLQTMTGTVEEANSSYIIRDFETESFENRKATFQEIADKMNQAYGQTRVDLVIKDQYYNMRQVIEKDMMPVELAKEVMEDLGIVPVIEPIRGGTDGSKISFMGIPTPNIFAGGENMHGRYEFVSLQTMEKAVDVILGIVSKP</sequence>
<keyword id="KW-0031">Aminopeptidase</keyword>
<keyword id="KW-0963">Cytoplasm</keyword>
<keyword id="KW-0378">Hydrolase</keyword>
<keyword id="KW-0479">Metal-binding</keyword>
<keyword id="KW-0482">Metalloprotease</keyword>
<keyword id="KW-0645">Protease</keyword>
<keyword id="KW-0862">Zinc</keyword>
<proteinExistence type="inferred from homology"/>
<accession>Q5LZL2</accession>
<gene>
    <name evidence="1" type="primary">pepT</name>
    <name type="ordered locus">str1139</name>
</gene>
<protein>
    <recommendedName>
        <fullName evidence="1">Peptidase T</fullName>
        <ecNumber evidence="1">3.4.11.4</ecNumber>
    </recommendedName>
    <alternativeName>
        <fullName evidence="1">Aminotripeptidase</fullName>
        <shortName evidence="1">Tripeptidase</shortName>
    </alternativeName>
    <alternativeName>
        <fullName evidence="1">Tripeptide aminopeptidase</fullName>
    </alternativeName>
</protein>
<feature type="chain" id="PRO_0000185328" description="Peptidase T">
    <location>
        <begin position="1"/>
        <end position="407"/>
    </location>
</feature>
<feature type="active site" evidence="1">
    <location>
        <position position="84"/>
    </location>
</feature>
<feature type="active site" description="Proton acceptor" evidence="1">
    <location>
        <position position="177"/>
    </location>
</feature>
<feature type="binding site" evidence="1">
    <location>
        <position position="82"/>
    </location>
    <ligand>
        <name>Zn(2+)</name>
        <dbReference type="ChEBI" id="CHEBI:29105"/>
        <label>1</label>
    </ligand>
</feature>
<feature type="binding site" evidence="1">
    <location>
        <position position="143"/>
    </location>
    <ligand>
        <name>Zn(2+)</name>
        <dbReference type="ChEBI" id="CHEBI:29105"/>
        <label>1</label>
    </ligand>
</feature>
<feature type="binding site" evidence="1">
    <location>
        <position position="143"/>
    </location>
    <ligand>
        <name>Zn(2+)</name>
        <dbReference type="ChEBI" id="CHEBI:29105"/>
        <label>2</label>
    </ligand>
</feature>
<feature type="binding site" evidence="1">
    <location>
        <position position="178"/>
    </location>
    <ligand>
        <name>Zn(2+)</name>
        <dbReference type="ChEBI" id="CHEBI:29105"/>
        <label>2</label>
    </ligand>
</feature>
<feature type="binding site" evidence="1">
    <location>
        <position position="200"/>
    </location>
    <ligand>
        <name>Zn(2+)</name>
        <dbReference type="ChEBI" id="CHEBI:29105"/>
        <label>1</label>
    </ligand>
</feature>
<feature type="binding site" evidence="1">
    <location>
        <position position="382"/>
    </location>
    <ligand>
        <name>Zn(2+)</name>
        <dbReference type="ChEBI" id="CHEBI:29105"/>
        <label>2</label>
    </ligand>
</feature>
<evidence type="ECO:0000255" key="1">
    <source>
        <dbReference type="HAMAP-Rule" id="MF_00550"/>
    </source>
</evidence>
<dbReference type="EC" id="3.4.11.4" evidence="1"/>
<dbReference type="EMBL" id="CP000024">
    <property type="protein sequence ID" value="AAV62687.1"/>
    <property type="molecule type" value="Genomic_DNA"/>
</dbReference>
<dbReference type="RefSeq" id="WP_011226068.1">
    <property type="nucleotide sequence ID" value="NC_006449.1"/>
</dbReference>
<dbReference type="SMR" id="Q5LZL2"/>
<dbReference type="MEROPS" id="M20.003"/>
<dbReference type="GeneID" id="66898935"/>
<dbReference type="KEGG" id="stc:str1139"/>
<dbReference type="HOGENOM" id="CLU_053676_0_0_9"/>
<dbReference type="GO" id="GO:0005829">
    <property type="term" value="C:cytosol"/>
    <property type="evidence" value="ECO:0007669"/>
    <property type="project" value="TreeGrafter"/>
</dbReference>
<dbReference type="GO" id="GO:0008237">
    <property type="term" value="F:metallopeptidase activity"/>
    <property type="evidence" value="ECO:0007669"/>
    <property type="project" value="UniProtKB-KW"/>
</dbReference>
<dbReference type="GO" id="GO:0045148">
    <property type="term" value="F:tripeptide aminopeptidase activity"/>
    <property type="evidence" value="ECO:0007669"/>
    <property type="project" value="UniProtKB-UniRule"/>
</dbReference>
<dbReference type="GO" id="GO:0008270">
    <property type="term" value="F:zinc ion binding"/>
    <property type="evidence" value="ECO:0007669"/>
    <property type="project" value="UniProtKB-UniRule"/>
</dbReference>
<dbReference type="GO" id="GO:0043171">
    <property type="term" value="P:peptide catabolic process"/>
    <property type="evidence" value="ECO:0007669"/>
    <property type="project" value="UniProtKB-UniRule"/>
</dbReference>
<dbReference type="GO" id="GO:0006508">
    <property type="term" value="P:proteolysis"/>
    <property type="evidence" value="ECO:0007669"/>
    <property type="project" value="UniProtKB-UniRule"/>
</dbReference>
<dbReference type="CDD" id="cd03892">
    <property type="entry name" value="M20_peptT"/>
    <property type="match status" value="1"/>
</dbReference>
<dbReference type="FunFam" id="3.30.70.360:FF:000002">
    <property type="entry name" value="Peptidase T"/>
    <property type="match status" value="1"/>
</dbReference>
<dbReference type="Gene3D" id="3.30.70.360">
    <property type="match status" value="1"/>
</dbReference>
<dbReference type="Gene3D" id="3.40.630.10">
    <property type="entry name" value="Zn peptidases"/>
    <property type="match status" value="1"/>
</dbReference>
<dbReference type="HAMAP" id="MF_00550">
    <property type="entry name" value="Aminopeptidase_M20"/>
    <property type="match status" value="1"/>
</dbReference>
<dbReference type="InterPro" id="IPR001261">
    <property type="entry name" value="ArgE/DapE_CS"/>
</dbReference>
<dbReference type="InterPro" id="IPR036264">
    <property type="entry name" value="Bact_exopeptidase_dim_dom"/>
</dbReference>
<dbReference type="InterPro" id="IPR002933">
    <property type="entry name" value="Peptidase_M20"/>
</dbReference>
<dbReference type="InterPro" id="IPR011650">
    <property type="entry name" value="Peptidase_M20_dimer"/>
</dbReference>
<dbReference type="InterPro" id="IPR010161">
    <property type="entry name" value="Peptidase_M20B"/>
</dbReference>
<dbReference type="NCBIfam" id="TIGR01882">
    <property type="entry name" value="peptidase-T"/>
    <property type="match status" value="1"/>
</dbReference>
<dbReference type="NCBIfam" id="NF003976">
    <property type="entry name" value="PRK05469.1"/>
    <property type="match status" value="1"/>
</dbReference>
<dbReference type="NCBIfam" id="NF009920">
    <property type="entry name" value="PRK13381.1"/>
    <property type="match status" value="1"/>
</dbReference>
<dbReference type="PANTHER" id="PTHR42994">
    <property type="entry name" value="PEPTIDASE T"/>
    <property type="match status" value="1"/>
</dbReference>
<dbReference type="PANTHER" id="PTHR42994:SF1">
    <property type="entry name" value="PEPTIDASE T"/>
    <property type="match status" value="1"/>
</dbReference>
<dbReference type="Pfam" id="PF07687">
    <property type="entry name" value="M20_dimer"/>
    <property type="match status" value="1"/>
</dbReference>
<dbReference type="Pfam" id="PF01546">
    <property type="entry name" value="Peptidase_M20"/>
    <property type="match status" value="1"/>
</dbReference>
<dbReference type="PIRSF" id="PIRSF037215">
    <property type="entry name" value="Peptidase_M20B"/>
    <property type="match status" value="1"/>
</dbReference>
<dbReference type="SUPFAM" id="SSF55031">
    <property type="entry name" value="Bacterial exopeptidase dimerisation domain"/>
    <property type="match status" value="1"/>
</dbReference>
<dbReference type="SUPFAM" id="SSF53187">
    <property type="entry name" value="Zn-dependent exopeptidases"/>
    <property type="match status" value="1"/>
</dbReference>
<dbReference type="PROSITE" id="PS00758">
    <property type="entry name" value="ARGE_DAPE_CPG2_1"/>
    <property type="match status" value="1"/>
</dbReference>
<dbReference type="PROSITE" id="PS00759">
    <property type="entry name" value="ARGE_DAPE_CPG2_2"/>
    <property type="match status" value="1"/>
</dbReference>